<comment type="function">
    <text evidence="1">Necessary for efficient RNA polymerase transcription elongation past template-encoded arresting sites. The arresting sites in DNA have the property of trapping a certain fraction of elongating RNA polymerases that pass through, resulting in locked ternary complexes. Cleavage of the nascent transcript by cleavage factors such as GreA or GreB allows the resumption of elongation from the new 3'terminus. GreA releases sequences of 2 to 3 nucleotides.</text>
</comment>
<comment type="similarity">
    <text evidence="1">Belongs to the GreA/GreB family.</text>
</comment>
<gene>
    <name evidence="1" type="primary">greA</name>
    <name type="ordered locus">jhp_0800</name>
</gene>
<organism>
    <name type="scientific">Helicobacter pylori (strain J99 / ATCC 700824)</name>
    <name type="common">Campylobacter pylori J99</name>
    <dbReference type="NCBI Taxonomy" id="85963"/>
    <lineage>
        <taxon>Bacteria</taxon>
        <taxon>Pseudomonadati</taxon>
        <taxon>Campylobacterota</taxon>
        <taxon>Epsilonproteobacteria</taxon>
        <taxon>Campylobacterales</taxon>
        <taxon>Helicobacteraceae</taxon>
        <taxon>Helicobacter</taxon>
    </lineage>
</organism>
<protein>
    <recommendedName>
        <fullName evidence="1">Transcription elongation factor GreA</fullName>
    </recommendedName>
    <alternativeName>
        <fullName evidence="1">Transcript cleavage factor GreA</fullName>
    </alternativeName>
</protein>
<reference key="1">
    <citation type="journal article" date="1999" name="Nature">
        <title>Genomic sequence comparison of two unrelated isolates of the human gastric pathogen Helicobacter pylori.</title>
        <authorList>
            <person name="Alm R.A."/>
            <person name="Ling L.-S.L."/>
            <person name="Moir D.T."/>
            <person name="King B.L."/>
            <person name="Brown E.D."/>
            <person name="Doig P.C."/>
            <person name="Smith D.R."/>
            <person name="Noonan B."/>
            <person name="Guild B.C."/>
            <person name="deJonge B.L."/>
            <person name="Carmel G."/>
            <person name="Tummino P.J."/>
            <person name="Caruso A."/>
            <person name="Uria-Nickelsen M."/>
            <person name="Mills D.M."/>
            <person name="Ives C."/>
            <person name="Gibson R."/>
            <person name="Merberg D."/>
            <person name="Mills S.D."/>
            <person name="Jiang Q."/>
            <person name="Taylor D.E."/>
            <person name="Vovis G.F."/>
            <person name="Trust T.J."/>
        </authorList>
    </citation>
    <scope>NUCLEOTIDE SEQUENCE [LARGE SCALE GENOMIC DNA]</scope>
    <source>
        <strain>J99 / ATCC 700824</strain>
    </source>
</reference>
<dbReference type="EMBL" id="AE001439">
    <property type="protein sequence ID" value="AAD06376.1"/>
    <property type="molecule type" value="Genomic_DNA"/>
</dbReference>
<dbReference type="RefSeq" id="WP_001031337.1">
    <property type="nucleotide sequence ID" value="NZ_CP011330.1"/>
</dbReference>
<dbReference type="SMR" id="P64276"/>
<dbReference type="KEGG" id="hpj:jhp_0800"/>
<dbReference type="PATRIC" id="fig|85963.30.peg.172"/>
<dbReference type="eggNOG" id="COG0782">
    <property type="taxonomic scope" value="Bacteria"/>
</dbReference>
<dbReference type="Proteomes" id="UP000000804">
    <property type="component" value="Chromosome"/>
</dbReference>
<dbReference type="GO" id="GO:0003677">
    <property type="term" value="F:DNA binding"/>
    <property type="evidence" value="ECO:0007669"/>
    <property type="project" value="UniProtKB-UniRule"/>
</dbReference>
<dbReference type="GO" id="GO:0070063">
    <property type="term" value="F:RNA polymerase binding"/>
    <property type="evidence" value="ECO:0007669"/>
    <property type="project" value="InterPro"/>
</dbReference>
<dbReference type="GO" id="GO:0006354">
    <property type="term" value="P:DNA-templated transcription elongation"/>
    <property type="evidence" value="ECO:0007669"/>
    <property type="project" value="TreeGrafter"/>
</dbReference>
<dbReference type="GO" id="GO:0032784">
    <property type="term" value="P:regulation of DNA-templated transcription elongation"/>
    <property type="evidence" value="ECO:0007669"/>
    <property type="project" value="UniProtKB-UniRule"/>
</dbReference>
<dbReference type="FunFam" id="1.10.287.180:FF:000001">
    <property type="entry name" value="Transcription elongation factor GreA"/>
    <property type="match status" value="1"/>
</dbReference>
<dbReference type="FunFam" id="3.10.50.30:FF:000001">
    <property type="entry name" value="Transcription elongation factor GreA"/>
    <property type="match status" value="1"/>
</dbReference>
<dbReference type="Gene3D" id="3.10.50.30">
    <property type="entry name" value="Transcription elongation factor, GreA/GreB, C-terminal domain"/>
    <property type="match status" value="1"/>
</dbReference>
<dbReference type="Gene3D" id="1.10.287.180">
    <property type="entry name" value="Transcription elongation factor, GreA/GreB, N-terminal domain"/>
    <property type="match status" value="1"/>
</dbReference>
<dbReference type="HAMAP" id="MF_00105">
    <property type="entry name" value="GreA_GreB"/>
    <property type="match status" value="1"/>
</dbReference>
<dbReference type="InterPro" id="IPR036953">
    <property type="entry name" value="GreA/GreB_C_sf"/>
</dbReference>
<dbReference type="InterPro" id="IPR018151">
    <property type="entry name" value="TF_GreA/GreB_CS"/>
</dbReference>
<dbReference type="InterPro" id="IPR006359">
    <property type="entry name" value="Tscrpt_elong_fac_GreA"/>
</dbReference>
<dbReference type="InterPro" id="IPR028624">
    <property type="entry name" value="Tscrpt_elong_fac_GreA/B"/>
</dbReference>
<dbReference type="InterPro" id="IPR001437">
    <property type="entry name" value="Tscrpt_elong_fac_GreA/B_C"/>
</dbReference>
<dbReference type="InterPro" id="IPR023459">
    <property type="entry name" value="Tscrpt_elong_fac_GreA/B_fam"/>
</dbReference>
<dbReference type="InterPro" id="IPR022691">
    <property type="entry name" value="Tscrpt_elong_fac_GreA/B_N"/>
</dbReference>
<dbReference type="InterPro" id="IPR036805">
    <property type="entry name" value="Tscrpt_elong_fac_GreA/B_N_sf"/>
</dbReference>
<dbReference type="NCBIfam" id="TIGR01462">
    <property type="entry name" value="greA"/>
    <property type="match status" value="1"/>
</dbReference>
<dbReference type="NCBIfam" id="NF001261">
    <property type="entry name" value="PRK00226.1-2"/>
    <property type="match status" value="1"/>
</dbReference>
<dbReference type="NCBIfam" id="NF001263">
    <property type="entry name" value="PRK00226.1-4"/>
    <property type="match status" value="1"/>
</dbReference>
<dbReference type="NCBIfam" id="NF001264">
    <property type="entry name" value="PRK00226.1-5"/>
    <property type="match status" value="1"/>
</dbReference>
<dbReference type="PANTHER" id="PTHR30437">
    <property type="entry name" value="TRANSCRIPTION ELONGATION FACTOR GREA"/>
    <property type="match status" value="1"/>
</dbReference>
<dbReference type="PANTHER" id="PTHR30437:SF4">
    <property type="entry name" value="TRANSCRIPTION ELONGATION FACTOR GREA"/>
    <property type="match status" value="1"/>
</dbReference>
<dbReference type="Pfam" id="PF01272">
    <property type="entry name" value="GreA_GreB"/>
    <property type="match status" value="1"/>
</dbReference>
<dbReference type="Pfam" id="PF03449">
    <property type="entry name" value="GreA_GreB_N"/>
    <property type="match status" value="1"/>
</dbReference>
<dbReference type="PIRSF" id="PIRSF006092">
    <property type="entry name" value="GreA_GreB"/>
    <property type="match status" value="1"/>
</dbReference>
<dbReference type="SUPFAM" id="SSF54534">
    <property type="entry name" value="FKBP-like"/>
    <property type="match status" value="1"/>
</dbReference>
<dbReference type="SUPFAM" id="SSF46557">
    <property type="entry name" value="GreA transcript cleavage protein, N-terminal domain"/>
    <property type="match status" value="1"/>
</dbReference>
<dbReference type="PROSITE" id="PS00829">
    <property type="entry name" value="GREAB_1"/>
    <property type="match status" value="1"/>
</dbReference>
<dbReference type="PROSITE" id="PS00830">
    <property type="entry name" value="GREAB_2"/>
    <property type="match status" value="1"/>
</dbReference>
<evidence type="ECO:0000255" key="1">
    <source>
        <dbReference type="HAMAP-Rule" id="MF_00105"/>
    </source>
</evidence>
<proteinExistence type="inferred from homology"/>
<sequence>MNKEPMSMHGYNKICAELKQLKEVERPNIVKEIDIARGHGDLKENAEYHAAKEKQRFIEARIVDLSEIVANAQVIDPSALAHNKVSFGSTIKILNLDNDKEFSYTIVGSVESDPAKGLISFGSPIAKSLIGKSKGDAVSIQLPNGESDFEILDIYYKEICFDEN</sequence>
<name>GREA_HELPJ</name>
<accession>P64276</accession>
<accession>P55978</accession>
<feature type="chain" id="PRO_0000176932" description="Transcription elongation factor GreA">
    <location>
        <begin position="1"/>
        <end position="164"/>
    </location>
</feature>
<keyword id="KW-0238">DNA-binding</keyword>
<keyword id="KW-0804">Transcription</keyword>
<keyword id="KW-0805">Transcription regulation</keyword>